<proteinExistence type="inferred from homology"/>
<comment type="function">
    <text evidence="1">Necessary for normal cell division and for the maintenance of normal septation.</text>
</comment>
<comment type="cofactor">
    <cofactor evidence="1">
        <name>Mg(2+)</name>
        <dbReference type="ChEBI" id="CHEBI:18420"/>
    </cofactor>
</comment>
<comment type="similarity">
    <text evidence="1">Belongs to the TRAFAC class TrmE-Era-EngA-EngB-Septin-like GTPase superfamily. EngB GTPase family.</text>
</comment>
<dbReference type="EMBL" id="AP008229">
    <property type="protein sequence ID" value="BAE70418.1"/>
    <property type="molecule type" value="Genomic_DNA"/>
</dbReference>
<dbReference type="SMR" id="Q2NZ59"/>
<dbReference type="KEGG" id="xom:XOO3663"/>
<dbReference type="HOGENOM" id="CLU_033732_1_0_6"/>
<dbReference type="GO" id="GO:0005829">
    <property type="term" value="C:cytosol"/>
    <property type="evidence" value="ECO:0007669"/>
    <property type="project" value="TreeGrafter"/>
</dbReference>
<dbReference type="GO" id="GO:0005525">
    <property type="term" value="F:GTP binding"/>
    <property type="evidence" value="ECO:0007669"/>
    <property type="project" value="UniProtKB-UniRule"/>
</dbReference>
<dbReference type="GO" id="GO:0046872">
    <property type="term" value="F:metal ion binding"/>
    <property type="evidence" value="ECO:0007669"/>
    <property type="project" value="UniProtKB-KW"/>
</dbReference>
<dbReference type="GO" id="GO:0000917">
    <property type="term" value="P:division septum assembly"/>
    <property type="evidence" value="ECO:0007669"/>
    <property type="project" value="UniProtKB-KW"/>
</dbReference>
<dbReference type="CDD" id="cd01876">
    <property type="entry name" value="YihA_EngB"/>
    <property type="match status" value="1"/>
</dbReference>
<dbReference type="FunFam" id="3.40.50.300:FF:000098">
    <property type="entry name" value="Probable GTP-binding protein EngB"/>
    <property type="match status" value="1"/>
</dbReference>
<dbReference type="Gene3D" id="3.40.50.300">
    <property type="entry name" value="P-loop containing nucleotide triphosphate hydrolases"/>
    <property type="match status" value="1"/>
</dbReference>
<dbReference type="HAMAP" id="MF_00321">
    <property type="entry name" value="GTPase_EngB"/>
    <property type="match status" value="1"/>
</dbReference>
<dbReference type="InterPro" id="IPR030393">
    <property type="entry name" value="G_ENGB_dom"/>
</dbReference>
<dbReference type="InterPro" id="IPR006073">
    <property type="entry name" value="GTP-bd"/>
</dbReference>
<dbReference type="InterPro" id="IPR019987">
    <property type="entry name" value="GTP-bd_ribosome_bio_YsxC"/>
</dbReference>
<dbReference type="InterPro" id="IPR027417">
    <property type="entry name" value="P-loop_NTPase"/>
</dbReference>
<dbReference type="NCBIfam" id="TIGR03598">
    <property type="entry name" value="GTPase_YsxC"/>
    <property type="match status" value="1"/>
</dbReference>
<dbReference type="PANTHER" id="PTHR11649:SF13">
    <property type="entry name" value="ENGB-TYPE G DOMAIN-CONTAINING PROTEIN"/>
    <property type="match status" value="1"/>
</dbReference>
<dbReference type="PANTHER" id="PTHR11649">
    <property type="entry name" value="MSS1/TRME-RELATED GTP-BINDING PROTEIN"/>
    <property type="match status" value="1"/>
</dbReference>
<dbReference type="Pfam" id="PF01926">
    <property type="entry name" value="MMR_HSR1"/>
    <property type="match status" value="1"/>
</dbReference>
<dbReference type="SUPFAM" id="SSF52540">
    <property type="entry name" value="P-loop containing nucleoside triphosphate hydrolases"/>
    <property type="match status" value="1"/>
</dbReference>
<dbReference type="PROSITE" id="PS51706">
    <property type="entry name" value="G_ENGB"/>
    <property type="match status" value="1"/>
</dbReference>
<protein>
    <recommendedName>
        <fullName evidence="1">Probable GTP-binding protein EngB</fullName>
    </recommendedName>
</protein>
<reference key="1">
    <citation type="journal article" date="2005" name="Jpn. Agric. Res. Q.">
        <title>Genome sequence of Xanthomonas oryzae pv. oryzae suggests contribution of large numbers of effector genes and insertion sequences to its race diversity.</title>
        <authorList>
            <person name="Ochiai H."/>
            <person name="Inoue Y."/>
            <person name="Takeya M."/>
            <person name="Sasaki A."/>
            <person name="Kaku H."/>
        </authorList>
    </citation>
    <scope>NUCLEOTIDE SEQUENCE [LARGE SCALE GENOMIC DNA]</scope>
    <source>
        <strain>MAFF 311018</strain>
    </source>
</reference>
<gene>
    <name evidence="1" type="primary">engB</name>
    <name type="ordered locus">XOO3663</name>
</gene>
<accession>Q2NZ59</accession>
<evidence type="ECO:0000255" key="1">
    <source>
        <dbReference type="HAMAP-Rule" id="MF_00321"/>
    </source>
</evidence>
<name>ENGB_XANOM</name>
<keyword id="KW-0131">Cell cycle</keyword>
<keyword id="KW-0132">Cell division</keyword>
<keyword id="KW-0342">GTP-binding</keyword>
<keyword id="KW-0460">Magnesium</keyword>
<keyword id="KW-0479">Metal-binding</keyword>
<keyword id="KW-0547">Nucleotide-binding</keyword>
<keyword id="KW-0717">Septation</keyword>
<feature type="chain" id="PRO_0000266982" description="Probable GTP-binding protein EngB">
    <location>
        <begin position="1"/>
        <end position="207"/>
    </location>
</feature>
<feature type="domain" description="EngB-type G" evidence="1">
    <location>
        <begin position="24"/>
        <end position="199"/>
    </location>
</feature>
<feature type="binding site" evidence="1">
    <location>
        <begin position="32"/>
        <end position="39"/>
    </location>
    <ligand>
        <name>GTP</name>
        <dbReference type="ChEBI" id="CHEBI:37565"/>
    </ligand>
</feature>
<feature type="binding site" evidence="1">
    <location>
        <position position="39"/>
    </location>
    <ligand>
        <name>Mg(2+)</name>
        <dbReference type="ChEBI" id="CHEBI:18420"/>
    </ligand>
</feature>
<feature type="binding site" evidence="1">
    <location>
        <begin position="59"/>
        <end position="63"/>
    </location>
    <ligand>
        <name>GTP</name>
        <dbReference type="ChEBI" id="CHEBI:37565"/>
    </ligand>
</feature>
<feature type="binding site" evidence="1">
    <location>
        <position position="61"/>
    </location>
    <ligand>
        <name>Mg(2+)</name>
        <dbReference type="ChEBI" id="CHEBI:18420"/>
    </ligand>
</feature>
<feature type="binding site" evidence="1">
    <location>
        <begin position="77"/>
        <end position="80"/>
    </location>
    <ligand>
        <name>GTP</name>
        <dbReference type="ChEBI" id="CHEBI:37565"/>
    </ligand>
</feature>
<feature type="binding site" evidence="1">
    <location>
        <begin position="144"/>
        <end position="147"/>
    </location>
    <ligand>
        <name>GTP</name>
        <dbReference type="ChEBI" id="CHEBI:37565"/>
    </ligand>
</feature>
<feature type="binding site" evidence="1">
    <location>
        <begin position="178"/>
        <end position="180"/>
    </location>
    <ligand>
        <name>GTP</name>
        <dbReference type="ChEBI" id="CHEBI:37565"/>
    </ligand>
</feature>
<sequence length="207" mass="23105">MSLLIEQARYHLSAHNARQLPDDGGYEVAFAGRSNAGKSSALNALTRQNALARVSKTPGRTQQLVFFQIQPERYLVDLPGYGYAKVPQDLQAHWQAFIDRYFRTREALRGLVVVMDIRHPLKDYDLQMLGYAAERGLPAHGLLTKADKLGRGQQMQTLQKVKKEVTSRFGDSVTVQTYSGQSRQGVDELRGIVGGWLGLIAEPLAEH</sequence>
<organism>
    <name type="scientific">Xanthomonas oryzae pv. oryzae (strain MAFF 311018)</name>
    <dbReference type="NCBI Taxonomy" id="342109"/>
    <lineage>
        <taxon>Bacteria</taxon>
        <taxon>Pseudomonadati</taxon>
        <taxon>Pseudomonadota</taxon>
        <taxon>Gammaproteobacteria</taxon>
        <taxon>Lysobacterales</taxon>
        <taxon>Lysobacteraceae</taxon>
        <taxon>Xanthomonas</taxon>
    </lineage>
</organism>